<reference key="1">
    <citation type="journal article" date="1988" name="J. Mol. Biol.">
        <title>Structure and organization of Marchantia polymorpha chloroplast genome. III. Gene organization of the large single copy region from rbcL to trnI(CAU).</title>
        <authorList>
            <person name="Fukuzawa H."/>
            <person name="Kohchi T."/>
            <person name="Sano T."/>
            <person name="Shirai H."/>
            <person name="Umesono K."/>
            <person name="Inokuchi H."/>
            <person name="Ozeki H."/>
            <person name="Ohyama K."/>
        </authorList>
    </citation>
    <scope>NUCLEOTIDE SEQUENCE [GENOMIC DNA]</scope>
</reference>
<reference key="2">
    <citation type="journal article" date="1986" name="Nature">
        <title>Chloroplast gene organization deduced from complete sequence of liverwort Marchantia polymorpha chloroplast DNA.</title>
        <authorList>
            <person name="Ohyama K."/>
            <person name="Fukuzawa H."/>
            <person name="Kohchi T."/>
            <person name="Shirai H."/>
            <person name="Sano T."/>
            <person name="Sano S."/>
            <person name="Umesono K."/>
            <person name="Shiki Y."/>
            <person name="Takeuchi M."/>
            <person name="Chang Z."/>
            <person name="Aota S."/>
            <person name="Inokuchi H."/>
            <person name="Ozeki H."/>
        </authorList>
    </citation>
    <scope>NUCLEOTIDE SEQUENCE [LARGE SCALE GENOMIC DNA]</scope>
</reference>
<sequence>MGNDTIANMITSIRNANLGKIKTVQVPATNITRNIAKILFQEGFIDNFIDNKQNTKDILILNLKYQGKKKKSYITTLRRISKPGLRIYSNHKEIPKVLGGMGIVILSTSRGIMTDREARQKKIGGELLCYVW</sequence>
<organism>
    <name type="scientific">Marchantia polymorpha</name>
    <name type="common">Common liverwort</name>
    <name type="synonym">Marchantia aquatica</name>
    <dbReference type="NCBI Taxonomy" id="3197"/>
    <lineage>
        <taxon>Eukaryota</taxon>
        <taxon>Viridiplantae</taxon>
        <taxon>Streptophyta</taxon>
        <taxon>Embryophyta</taxon>
        <taxon>Marchantiophyta</taxon>
        <taxon>Marchantiopsida</taxon>
        <taxon>Marchantiidae</taxon>
        <taxon>Marchantiales</taxon>
        <taxon>Marchantiaceae</taxon>
        <taxon>Marchantia</taxon>
    </lineage>
</organism>
<keyword id="KW-0150">Chloroplast</keyword>
<keyword id="KW-0934">Plastid</keyword>
<keyword id="KW-0687">Ribonucleoprotein</keyword>
<keyword id="KW-0689">Ribosomal protein</keyword>
<keyword id="KW-0694">RNA-binding</keyword>
<keyword id="KW-0699">rRNA-binding</keyword>
<name>RR8_MARPO</name>
<feature type="chain" id="PRO_0000126576" description="Small ribosomal subunit protein uS8c">
    <location>
        <begin position="1"/>
        <end position="132"/>
    </location>
</feature>
<protein>
    <recommendedName>
        <fullName evidence="2">Small ribosomal subunit protein uS8c</fullName>
    </recommendedName>
    <alternativeName>
        <fullName>30S ribosomal protein S8, chloroplastic</fullName>
    </alternativeName>
</protein>
<comment type="function">
    <text evidence="1">One of the primary rRNA binding proteins, it binds directly to 16S rRNA central domain where it helps coordinate assembly of the platform of the 30S subunit.</text>
</comment>
<comment type="subunit">
    <text evidence="1">Part of the 30S ribosomal subunit.</text>
</comment>
<comment type="subcellular location">
    <subcellularLocation>
        <location>Plastid</location>
        <location>Chloroplast</location>
    </subcellularLocation>
</comment>
<comment type="similarity">
    <text evidence="2">Belongs to the universal ribosomal protein uS8 family.</text>
</comment>
<proteinExistence type="inferred from homology"/>
<dbReference type="EMBL" id="X04465">
    <property type="protein sequence ID" value="CAA28121.1"/>
    <property type="molecule type" value="Genomic_DNA"/>
</dbReference>
<dbReference type="PIR" id="A02716">
    <property type="entry name" value="R3LV8"/>
</dbReference>
<dbReference type="RefSeq" id="NP_039335.1">
    <property type="nucleotide sequence ID" value="NC_001319.1"/>
</dbReference>
<dbReference type="RefSeq" id="YP_009646848.1">
    <property type="nucleotide sequence ID" value="NC_042505.1"/>
</dbReference>
<dbReference type="SMR" id="P06362"/>
<dbReference type="GeneID" id="2702568"/>
<dbReference type="GeneID" id="40386734"/>
<dbReference type="GO" id="GO:0009507">
    <property type="term" value="C:chloroplast"/>
    <property type="evidence" value="ECO:0007669"/>
    <property type="project" value="UniProtKB-SubCell"/>
</dbReference>
<dbReference type="GO" id="GO:1990904">
    <property type="term" value="C:ribonucleoprotein complex"/>
    <property type="evidence" value="ECO:0007669"/>
    <property type="project" value="UniProtKB-KW"/>
</dbReference>
<dbReference type="GO" id="GO:0005840">
    <property type="term" value="C:ribosome"/>
    <property type="evidence" value="ECO:0007669"/>
    <property type="project" value="UniProtKB-KW"/>
</dbReference>
<dbReference type="GO" id="GO:0019843">
    <property type="term" value="F:rRNA binding"/>
    <property type="evidence" value="ECO:0007669"/>
    <property type="project" value="UniProtKB-UniRule"/>
</dbReference>
<dbReference type="GO" id="GO:0003735">
    <property type="term" value="F:structural constituent of ribosome"/>
    <property type="evidence" value="ECO:0007669"/>
    <property type="project" value="InterPro"/>
</dbReference>
<dbReference type="GO" id="GO:0006412">
    <property type="term" value="P:translation"/>
    <property type="evidence" value="ECO:0007669"/>
    <property type="project" value="UniProtKB-UniRule"/>
</dbReference>
<dbReference type="FunFam" id="3.30.1490.10:FF:000001">
    <property type="entry name" value="30S ribosomal protein S8"/>
    <property type="match status" value="1"/>
</dbReference>
<dbReference type="Gene3D" id="3.30.1370.30">
    <property type="match status" value="1"/>
</dbReference>
<dbReference type="Gene3D" id="3.30.1490.10">
    <property type="match status" value="1"/>
</dbReference>
<dbReference type="HAMAP" id="MF_01302_B">
    <property type="entry name" value="Ribosomal_uS8_B"/>
    <property type="match status" value="1"/>
</dbReference>
<dbReference type="InterPro" id="IPR000630">
    <property type="entry name" value="Ribosomal_uS8"/>
</dbReference>
<dbReference type="InterPro" id="IPR047863">
    <property type="entry name" value="Ribosomal_uS8_CS"/>
</dbReference>
<dbReference type="InterPro" id="IPR035987">
    <property type="entry name" value="Ribosomal_uS8_sf"/>
</dbReference>
<dbReference type="NCBIfam" id="NF001109">
    <property type="entry name" value="PRK00136.1"/>
    <property type="match status" value="1"/>
</dbReference>
<dbReference type="PANTHER" id="PTHR11758">
    <property type="entry name" value="40S RIBOSOMAL PROTEIN S15A"/>
    <property type="match status" value="1"/>
</dbReference>
<dbReference type="Pfam" id="PF00410">
    <property type="entry name" value="Ribosomal_S8"/>
    <property type="match status" value="1"/>
</dbReference>
<dbReference type="SUPFAM" id="SSF56047">
    <property type="entry name" value="Ribosomal protein S8"/>
    <property type="match status" value="1"/>
</dbReference>
<dbReference type="PROSITE" id="PS00053">
    <property type="entry name" value="RIBOSOMAL_S8"/>
    <property type="match status" value="1"/>
</dbReference>
<evidence type="ECO:0000250" key="1"/>
<evidence type="ECO:0000305" key="2"/>
<gene>
    <name type="primary">rps8</name>
</gene>
<geneLocation type="chloroplast"/>
<accession>P06362</accession>